<dbReference type="EMBL" id="CP001048">
    <property type="protein sequence ID" value="ACC89921.1"/>
    <property type="molecule type" value="Genomic_DNA"/>
</dbReference>
<dbReference type="RefSeq" id="WP_011192812.1">
    <property type="nucleotide sequence ID" value="NZ_CP009780.1"/>
</dbReference>
<dbReference type="SMR" id="B2K9R4"/>
<dbReference type="KEGG" id="ypb:YPTS_2964"/>
<dbReference type="PATRIC" id="fig|502801.10.peg.2396"/>
<dbReference type="GO" id="GO:1990230">
    <property type="term" value="C:iron-sulfur cluster transfer complex"/>
    <property type="evidence" value="ECO:0007669"/>
    <property type="project" value="TreeGrafter"/>
</dbReference>
<dbReference type="GO" id="GO:0001671">
    <property type="term" value="F:ATPase activator activity"/>
    <property type="evidence" value="ECO:0007669"/>
    <property type="project" value="InterPro"/>
</dbReference>
<dbReference type="GO" id="GO:0051087">
    <property type="term" value="F:protein-folding chaperone binding"/>
    <property type="evidence" value="ECO:0007669"/>
    <property type="project" value="InterPro"/>
</dbReference>
<dbReference type="GO" id="GO:0044571">
    <property type="term" value="P:[2Fe-2S] cluster assembly"/>
    <property type="evidence" value="ECO:0007669"/>
    <property type="project" value="InterPro"/>
</dbReference>
<dbReference type="GO" id="GO:0051259">
    <property type="term" value="P:protein complex oligomerization"/>
    <property type="evidence" value="ECO:0007669"/>
    <property type="project" value="InterPro"/>
</dbReference>
<dbReference type="GO" id="GO:0006457">
    <property type="term" value="P:protein folding"/>
    <property type="evidence" value="ECO:0007669"/>
    <property type="project" value="UniProtKB-UniRule"/>
</dbReference>
<dbReference type="CDD" id="cd06257">
    <property type="entry name" value="DnaJ"/>
    <property type="match status" value="1"/>
</dbReference>
<dbReference type="FunFam" id="1.10.287.110:FF:000008">
    <property type="entry name" value="Co-chaperone protein HscB"/>
    <property type="match status" value="1"/>
</dbReference>
<dbReference type="Gene3D" id="1.10.287.110">
    <property type="entry name" value="DnaJ domain"/>
    <property type="match status" value="1"/>
</dbReference>
<dbReference type="Gene3D" id="1.20.1280.20">
    <property type="entry name" value="HscB, C-terminal domain"/>
    <property type="match status" value="1"/>
</dbReference>
<dbReference type="HAMAP" id="MF_00682">
    <property type="entry name" value="HscB"/>
    <property type="match status" value="1"/>
</dbReference>
<dbReference type="InterPro" id="IPR001623">
    <property type="entry name" value="DnaJ_domain"/>
</dbReference>
<dbReference type="InterPro" id="IPR004640">
    <property type="entry name" value="HscB"/>
</dbReference>
<dbReference type="InterPro" id="IPR036386">
    <property type="entry name" value="HscB_C_sf"/>
</dbReference>
<dbReference type="InterPro" id="IPR009073">
    <property type="entry name" value="HscB_oligo_C"/>
</dbReference>
<dbReference type="InterPro" id="IPR036869">
    <property type="entry name" value="J_dom_sf"/>
</dbReference>
<dbReference type="NCBIfam" id="TIGR00714">
    <property type="entry name" value="hscB"/>
    <property type="match status" value="1"/>
</dbReference>
<dbReference type="NCBIfam" id="NF003449">
    <property type="entry name" value="PRK05014.1"/>
    <property type="match status" value="1"/>
</dbReference>
<dbReference type="PANTHER" id="PTHR14021">
    <property type="entry name" value="IRON-SULFUR CLUSTER CO-CHAPERONE PROTEIN HSCB"/>
    <property type="match status" value="1"/>
</dbReference>
<dbReference type="PANTHER" id="PTHR14021:SF15">
    <property type="entry name" value="IRON-SULFUR CLUSTER CO-CHAPERONE PROTEIN HSCB"/>
    <property type="match status" value="1"/>
</dbReference>
<dbReference type="Pfam" id="PF00226">
    <property type="entry name" value="DnaJ"/>
    <property type="match status" value="1"/>
</dbReference>
<dbReference type="Pfam" id="PF07743">
    <property type="entry name" value="HSCB_C"/>
    <property type="match status" value="1"/>
</dbReference>
<dbReference type="SMART" id="SM00271">
    <property type="entry name" value="DnaJ"/>
    <property type="match status" value="1"/>
</dbReference>
<dbReference type="SUPFAM" id="SSF46565">
    <property type="entry name" value="Chaperone J-domain"/>
    <property type="match status" value="1"/>
</dbReference>
<dbReference type="SUPFAM" id="SSF47144">
    <property type="entry name" value="HSC20 (HSCB), C-terminal oligomerisation domain"/>
    <property type="match status" value="1"/>
</dbReference>
<dbReference type="PROSITE" id="PS50076">
    <property type="entry name" value="DNAJ_2"/>
    <property type="match status" value="1"/>
</dbReference>
<sequence length="174" mass="20649">MDYFTLFGLPARYLIDGNQLTTRYQELQRQFHPDRFATQPERERLASMQQAATINDAYQTLKHPLKRAEYMLSLQGFDLGNEQHTMRDTAFLMEQLELREELDAIERKPDAETLLAEFSRRLAQMTTTRTQQMVEQLDAQLWVQAADTVRKLRFLDKLQQQVEQLEERLFDDFA</sequence>
<proteinExistence type="inferred from homology"/>
<reference key="1">
    <citation type="submission" date="2008-04" db="EMBL/GenBank/DDBJ databases">
        <title>Complete sequence of Yersinia pseudotuberculosis PB1/+.</title>
        <authorList>
            <person name="Copeland A."/>
            <person name="Lucas S."/>
            <person name="Lapidus A."/>
            <person name="Glavina del Rio T."/>
            <person name="Dalin E."/>
            <person name="Tice H."/>
            <person name="Bruce D."/>
            <person name="Goodwin L."/>
            <person name="Pitluck S."/>
            <person name="Munk A.C."/>
            <person name="Brettin T."/>
            <person name="Detter J.C."/>
            <person name="Han C."/>
            <person name="Tapia R."/>
            <person name="Schmutz J."/>
            <person name="Larimer F."/>
            <person name="Land M."/>
            <person name="Hauser L."/>
            <person name="Challacombe J.F."/>
            <person name="Green L."/>
            <person name="Lindler L.E."/>
            <person name="Nikolich M.P."/>
            <person name="Richardson P."/>
        </authorList>
    </citation>
    <scope>NUCLEOTIDE SEQUENCE [LARGE SCALE GENOMIC DNA]</scope>
    <source>
        <strain>PB1/+</strain>
    </source>
</reference>
<comment type="function">
    <text evidence="1">Co-chaperone involved in the maturation of iron-sulfur cluster-containing proteins. Seems to help targeting proteins to be folded toward HscA.</text>
</comment>
<comment type="subunit">
    <text evidence="1">Interacts with HscA and stimulates its ATPase activity. Interacts with IscU.</text>
</comment>
<comment type="similarity">
    <text evidence="1">Belongs to the HscB family.</text>
</comment>
<protein>
    <recommendedName>
        <fullName evidence="1">Co-chaperone protein HscB</fullName>
    </recommendedName>
    <alternativeName>
        <fullName evidence="1">Hsc20</fullName>
    </alternativeName>
</protein>
<accession>B2K9R4</accession>
<evidence type="ECO:0000255" key="1">
    <source>
        <dbReference type="HAMAP-Rule" id="MF_00682"/>
    </source>
</evidence>
<gene>
    <name evidence="1" type="primary">hscB</name>
    <name type="ordered locus">YPTS_2964</name>
</gene>
<name>HSCB_YERPB</name>
<organism>
    <name type="scientific">Yersinia pseudotuberculosis serotype IB (strain PB1/+)</name>
    <dbReference type="NCBI Taxonomy" id="502801"/>
    <lineage>
        <taxon>Bacteria</taxon>
        <taxon>Pseudomonadati</taxon>
        <taxon>Pseudomonadota</taxon>
        <taxon>Gammaproteobacteria</taxon>
        <taxon>Enterobacterales</taxon>
        <taxon>Yersiniaceae</taxon>
        <taxon>Yersinia</taxon>
    </lineage>
</organism>
<feature type="chain" id="PRO_1000131759" description="Co-chaperone protein HscB">
    <location>
        <begin position="1"/>
        <end position="174"/>
    </location>
</feature>
<feature type="domain" description="J" evidence="1">
    <location>
        <begin position="2"/>
        <end position="74"/>
    </location>
</feature>
<keyword id="KW-0143">Chaperone</keyword>